<sequence length="79" mass="7759">MDPKAFVSGMAALGAGIAALACIGAGIGTGNATGKAVEGVSRQPEASGKIMSTLVIGSAFSEATAIYGLIIALFLIFKI</sequence>
<keyword id="KW-0066">ATP synthesis</keyword>
<keyword id="KW-1003">Cell membrane</keyword>
<keyword id="KW-0138">CF(0)</keyword>
<keyword id="KW-0375">Hydrogen ion transport</keyword>
<keyword id="KW-0406">Ion transport</keyword>
<keyword id="KW-0446">Lipid-binding</keyword>
<keyword id="KW-0472">Membrane</keyword>
<keyword id="KW-0812">Transmembrane</keyword>
<keyword id="KW-1133">Transmembrane helix</keyword>
<keyword id="KW-0813">Transport</keyword>
<gene>
    <name evidence="1" type="primary">atpE</name>
    <name type="ordered locus">CLK_3326</name>
</gene>
<feature type="chain" id="PRO_0000365869" description="ATP synthase subunit c">
    <location>
        <begin position="1"/>
        <end position="79"/>
    </location>
</feature>
<feature type="transmembrane region" description="Helical" evidence="1">
    <location>
        <begin position="7"/>
        <end position="27"/>
    </location>
</feature>
<feature type="transmembrane region" description="Helical" evidence="1">
    <location>
        <begin position="56"/>
        <end position="76"/>
    </location>
</feature>
<feature type="site" description="Reversibly protonated during proton transport" evidence="1">
    <location>
        <position position="62"/>
    </location>
</feature>
<name>ATPL_CLOBM</name>
<proteinExistence type="inferred from homology"/>
<evidence type="ECO:0000255" key="1">
    <source>
        <dbReference type="HAMAP-Rule" id="MF_01396"/>
    </source>
</evidence>
<organism>
    <name type="scientific">Clostridium botulinum (strain Loch Maree / Type A3)</name>
    <dbReference type="NCBI Taxonomy" id="498214"/>
    <lineage>
        <taxon>Bacteria</taxon>
        <taxon>Bacillati</taxon>
        <taxon>Bacillota</taxon>
        <taxon>Clostridia</taxon>
        <taxon>Eubacteriales</taxon>
        <taxon>Clostridiaceae</taxon>
        <taxon>Clostridium</taxon>
    </lineage>
</organism>
<reference key="1">
    <citation type="journal article" date="2007" name="PLoS ONE">
        <title>Analysis of the neurotoxin complex genes in Clostridium botulinum A1-A4 and B1 strains: BoNT/A3, /Ba4 and /B1 clusters are located within plasmids.</title>
        <authorList>
            <person name="Smith T.J."/>
            <person name="Hill K.K."/>
            <person name="Foley B.T."/>
            <person name="Detter J.C."/>
            <person name="Munk A.C."/>
            <person name="Bruce D.C."/>
            <person name="Doggett N.A."/>
            <person name="Smith L.A."/>
            <person name="Marks J.D."/>
            <person name="Xie G."/>
            <person name="Brettin T.S."/>
        </authorList>
    </citation>
    <scope>NUCLEOTIDE SEQUENCE [LARGE SCALE GENOMIC DNA]</scope>
    <source>
        <strain>Loch Maree / Type A3</strain>
    </source>
</reference>
<protein>
    <recommendedName>
        <fullName evidence="1">ATP synthase subunit c</fullName>
    </recommendedName>
    <alternativeName>
        <fullName evidence="1">ATP synthase F(0) sector subunit c</fullName>
    </alternativeName>
    <alternativeName>
        <fullName evidence="1">F-type ATPase subunit c</fullName>
        <shortName evidence="1">F-ATPase subunit c</shortName>
    </alternativeName>
    <alternativeName>
        <fullName evidence="1">Lipid-binding protein</fullName>
    </alternativeName>
</protein>
<accession>B1KSS3</accession>
<comment type="function">
    <text evidence="1">F(1)F(0) ATP synthase produces ATP from ADP in the presence of a proton or sodium gradient. F-type ATPases consist of two structural domains, F(1) containing the extramembraneous catalytic core and F(0) containing the membrane proton channel, linked together by a central stalk and a peripheral stalk. During catalysis, ATP synthesis in the catalytic domain of F(1) is coupled via a rotary mechanism of the central stalk subunits to proton translocation.</text>
</comment>
<comment type="function">
    <text evidence="1">Key component of the F(0) channel; it plays a direct role in translocation across the membrane. A homomeric c-ring of between 10-14 subunits forms the central stalk rotor element with the F(1) delta and epsilon subunits.</text>
</comment>
<comment type="subunit">
    <text evidence="1">F-type ATPases have 2 components, F(1) - the catalytic core - and F(0) - the membrane proton channel. F(1) has five subunits: alpha(3), beta(3), gamma(1), delta(1), epsilon(1). F(0) has three main subunits: a(1), b(2) and c(10-14). The alpha and beta chains form an alternating ring which encloses part of the gamma chain. F(1) is attached to F(0) by a central stalk formed by the gamma and epsilon chains, while a peripheral stalk is formed by the delta and b chains.</text>
</comment>
<comment type="subcellular location">
    <subcellularLocation>
        <location evidence="1">Cell membrane</location>
        <topology evidence="1">Multi-pass membrane protein</topology>
    </subcellularLocation>
</comment>
<comment type="similarity">
    <text evidence="1">Belongs to the ATPase C chain family.</text>
</comment>
<dbReference type="EMBL" id="CP000962">
    <property type="protein sequence ID" value="ACA53836.1"/>
    <property type="molecule type" value="Genomic_DNA"/>
</dbReference>
<dbReference type="RefSeq" id="WP_003356112.1">
    <property type="nucleotide sequence ID" value="NC_010520.1"/>
</dbReference>
<dbReference type="SMR" id="B1KSS3"/>
<dbReference type="GeneID" id="92936949"/>
<dbReference type="KEGG" id="cbl:CLK_3326"/>
<dbReference type="HOGENOM" id="CLU_148047_2_0_9"/>
<dbReference type="GO" id="GO:0005886">
    <property type="term" value="C:plasma membrane"/>
    <property type="evidence" value="ECO:0007669"/>
    <property type="project" value="UniProtKB-SubCell"/>
</dbReference>
<dbReference type="GO" id="GO:0045259">
    <property type="term" value="C:proton-transporting ATP synthase complex"/>
    <property type="evidence" value="ECO:0007669"/>
    <property type="project" value="UniProtKB-KW"/>
</dbReference>
<dbReference type="GO" id="GO:0033177">
    <property type="term" value="C:proton-transporting two-sector ATPase complex, proton-transporting domain"/>
    <property type="evidence" value="ECO:0007669"/>
    <property type="project" value="InterPro"/>
</dbReference>
<dbReference type="GO" id="GO:0008289">
    <property type="term" value="F:lipid binding"/>
    <property type="evidence" value="ECO:0007669"/>
    <property type="project" value="UniProtKB-KW"/>
</dbReference>
<dbReference type="GO" id="GO:0046933">
    <property type="term" value="F:proton-transporting ATP synthase activity, rotational mechanism"/>
    <property type="evidence" value="ECO:0007669"/>
    <property type="project" value="UniProtKB-UniRule"/>
</dbReference>
<dbReference type="CDD" id="cd18184">
    <property type="entry name" value="ATP-synt_Fo_c_NaATPase"/>
    <property type="match status" value="1"/>
</dbReference>
<dbReference type="FunFam" id="1.20.20.10:FF:000001">
    <property type="entry name" value="ATP synthase subunit c, chloroplastic"/>
    <property type="match status" value="1"/>
</dbReference>
<dbReference type="Gene3D" id="1.20.20.10">
    <property type="entry name" value="F1F0 ATP synthase subunit C"/>
    <property type="match status" value="1"/>
</dbReference>
<dbReference type="HAMAP" id="MF_01396">
    <property type="entry name" value="ATP_synth_c_bact"/>
    <property type="match status" value="1"/>
</dbReference>
<dbReference type="InterPro" id="IPR005953">
    <property type="entry name" value="ATP_synth_csu_bac/chlpt"/>
</dbReference>
<dbReference type="InterPro" id="IPR000454">
    <property type="entry name" value="ATP_synth_F0_csu"/>
</dbReference>
<dbReference type="InterPro" id="IPR020537">
    <property type="entry name" value="ATP_synth_F0_csu_DDCD_BS"/>
</dbReference>
<dbReference type="InterPro" id="IPR038662">
    <property type="entry name" value="ATP_synth_F0_csu_sf"/>
</dbReference>
<dbReference type="InterPro" id="IPR002379">
    <property type="entry name" value="ATPase_proteolipid_c-like_dom"/>
</dbReference>
<dbReference type="InterPro" id="IPR035921">
    <property type="entry name" value="F/V-ATP_Csub_sf"/>
</dbReference>
<dbReference type="NCBIfam" id="TIGR01260">
    <property type="entry name" value="ATP_synt_c"/>
    <property type="match status" value="1"/>
</dbReference>
<dbReference type="PANTHER" id="PTHR10031">
    <property type="entry name" value="ATP SYNTHASE LIPID-BINDING PROTEIN, MITOCHONDRIAL"/>
    <property type="match status" value="1"/>
</dbReference>
<dbReference type="PANTHER" id="PTHR10031:SF0">
    <property type="entry name" value="ATPASE PROTEIN 9"/>
    <property type="match status" value="1"/>
</dbReference>
<dbReference type="Pfam" id="PF00137">
    <property type="entry name" value="ATP-synt_C"/>
    <property type="match status" value="1"/>
</dbReference>
<dbReference type="PRINTS" id="PR00124">
    <property type="entry name" value="ATPASEC"/>
</dbReference>
<dbReference type="SUPFAM" id="SSF81333">
    <property type="entry name" value="F1F0 ATP synthase subunit C"/>
    <property type="match status" value="1"/>
</dbReference>
<dbReference type="PROSITE" id="PS00605">
    <property type="entry name" value="ATPASE_C"/>
    <property type="match status" value="1"/>
</dbReference>